<accession>A5UHD2</accession>
<organism>
    <name type="scientific">Haemophilus influenzae (strain PittGG)</name>
    <dbReference type="NCBI Taxonomy" id="374931"/>
    <lineage>
        <taxon>Bacteria</taxon>
        <taxon>Pseudomonadati</taxon>
        <taxon>Pseudomonadota</taxon>
        <taxon>Gammaproteobacteria</taxon>
        <taxon>Pasteurellales</taxon>
        <taxon>Pasteurellaceae</taxon>
        <taxon>Haemophilus</taxon>
    </lineage>
</organism>
<dbReference type="EMBL" id="CP000672">
    <property type="protein sequence ID" value="ABR00188.1"/>
    <property type="molecule type" value="Genomic_DNA"/>
</dbReference>
<dbReference type="SMR" id="A5UHD2"/>
<dbReference type="KEGG" id="hiq:CGSHiGG_06465"/>
<dbReference type="HOGENOM" id="CLU_086499_3_2_6"/>
<dbReference type="Proteomes" id="UP000001990">
    <property type="component" value="Chromosome"/>
</dbReference>
<dbReference type="GO" id="GO:0022625">
    <property type="term" value="C:cytosolic large ribosomal subunit"/>
    <property type="evidence" value="ECO:0007669"/>
    <property type="project" value="TreeGrafter"/>
</dbReference>
<dbReference type="GO" id="GO:0003729">
    <property type="term" value="F:mRNA binding"/>
    <property type="evidence" value="ECO:0007669"/>
    <property type="project" value="TreeGrafter"/>
</dbReference>
<dbReference type="GO" id="GO:0003735">
    <property type="term" value="F:structural constituent of ribosome"/>
    <property type="evidence" value="ECO:0007669"/>
    <property type="project" value="InterPro"/>
</dbReference>
<dbReference type="GO" id="GO:0006412">
    <property type="term" value="P:translation"/>
    <property type="evidence" value="ECO:0007669"/>
    <property type="project" value="UniProtKB-UniRule"/>
</dbReference>
<dbReference type="CDD" id="cd00387">
    <property type="entry name" value="Ribosomal_L7_L12"/>
    <property type="match status" value="1"/>
</dbReference>
<dbReference type="FunFam" id="1.20.5.710:FF:000003">
    <property type="entry name" value="50S ribosomal protein L7/L12"/>
    <property type="match status" value="1"/>
</dbReference>
<dbReference type="FunFam" id="3.30.1390.10:FF:000001">
    <property type="entry name" value="50S ribosomal protein L7/L12"/>
    <property type="match status" value="1"/>
</dbReference>
<dbReference type="Gene3D" id="3.30.1390.10">
    <property type="match status" value="1"/>
</dbReference>
<dbReference type="Gene3D" id="1.20.5.710">
    <property type="entry name" value="Single helix bin"/>
    <property type="match status" value="1"/>
</dbReference>
<dbReference type="HAMAP" id="MF_00368">
    <property type="entry name" value="Ribosomal_bL12"/>
    <property type="match status" value="1"/>
</dbReference>
<dbReference type="InterPro" id="IPR000206">
    <property type="entry name" value="Ribosomal_bL12"/>
</dbReference>
<dbReference type="InterPro" id="IPR013823">
    <property type="entry name" value="Ribosomal_bL12_C"/>
</dbReference>
<dbReference type="InterPro" id="IPR014719">
    <property type="entry name" value="Ribosomal_bL12_C/ClpS-like"/>
</dbReference>
<dbReference type="InterPro" id="IPR008932">
    <property type="entry name" value="Ribosomal_bL12_oligo"/>
</dbReference>
<dbReference type="InterPro" id="IPR036235">
    <property type="entry name" value="Ribosomal_bL12_oligo_N_sf"/>
</dbReference>
<dbReference type="NCBIfam" id="TIGR00855">
    <property type="entry name" value="L12"/>
    <property type="match status" value="1"/>
</dbReference>
<dbReference type="PANTHER" id="PTHR45987">
    <property type="entry name" value="39S RIBOSOMAL PROTEIN L12"/>
    <property type="match status" value="1"/>
</dbReference>
<dbReference type="PANTHER" id="PTHR45987:SF4">
    <property type="entry name" value="LARGE RIBOSOMAL SUBUNIT PROTEIN BL12M"/>
    <property type="match status" value="1"/>
</dbReference>
<dbReference type="Pfam" id="PF00542">
    <property type="entry name" value="Ribosomal_L12"/>
    <property type="match status" value="1"/>
</dbReference>
<dbReference type="Pfam" id="PF16320">
    <property type="entry name" value="Ribosomal_L12_N"/>
    <property type="match status" value="1"/>
</dbReference>
<dbReference type="SUPFAM" id="SSF54736">
    <property type="entry name" value="ClpS-like"/>
    <property type="match status" value="1"/>
</dbReference>
<dbReference type="SUPFAM" id="SSF48300">
    <property type="entry name" value="Ribosomal protein L7/12, oligomerisation (N-terminal) domain"/>
    <property type="match status" value="1"/>
</dbReference>
<keyword id="KW-0687">Ribonucleoprotein</keyword>
<keyword id="KW-0689">Ribosomal protein</keyword>
<sequence length="123" mass="12463">MSLTNEQIIEAIASKTVTEIVELIAAMEEKFGVSAAAAVAAAPAAGGAAAAEEKTEFDVVLKSAGANKVAVIKAVRGATGLGLKEAKDLVESAPANLKEGVSKEEAEALKKELEEAGAEVEVK</sequence>
<proteinExistence type="inferred from homology"/>
<evidence type="ECO:0000255" key="1">
    <source>
        <dbReference type="HAMAP-Rule" id="MF_00368"/>
    </source>
</evidence>
<evidence type="ECO:0000305" key="2"/>
<reference key="1">
    <citation type="journal article" date="2007" name="Genome Biol.">
        <title>Characterization and modeling of the Haemophilus influenzae core and supragenomes based on the complete genomic sequences of Rd and 12 clinical nontypeable strains.</title>
        <authorList>
            <person name="Hogg J.S."/>
            <person name="Hu F.Z."/>
            <person name="Janto B."/>
            <person name="Boissy R."/>
            <person name="Hayes J."/>
            <person name="Keefe R."/>
            <person name="Post J.C."/>
            <person name="Ehrlich G.D."/>
        </authorList>
    </citation>
    <scope>NUCLEOTIDE SEQUENCE [LARGE SCALE GENOMIC DNA]</scope>
    <source>
        <strain>PittGG</strain>
    </source>
</reference>
<comment type="function">
    <text evidence="1">Forms part of the ribosomal stalk which helps the ribosome interact with GTP-bound translation factors. Is thus essential for accurate translation.</text>
</comment>
<comment type="subunit">
    <text evidence="1">Homodimer. Part of the ribosomal stalk of the 50S ribosomal subunit. Forms a multimeric L10(L12)X complex, where L10 forms an elongated spine to which 2 to 4 L12 dimers bind in a sequential fashion. Binds GTP-bound translation factors.</text>
</comment>
<comment type="similarity">
    <text evidence="1">Belongs to the bacterial ribosomal protein bL12 family.</text>
</comment>
<name>RL7_HAEIG</name>
<gene>
    <name evidence="1" type="primary">rplL</name>
    <name type="ordered locus">CGSHiGG_06465</name>
</gene>
<protein>
    <recommendedName>
        <fullName evidence="1">Large ribosomal subunit protein bL12</fullName>
    </recommendedName>
    <alternativeName>
        <fullName evidence="2">50S ribosomal protein L7/L12</fullName>
    </alternativeName>
</protein>
<feature type="chain" id="PRO_1000007016" description="Large ribosomal subunit protein bL12">
    <location>
        <begin position="1"/>
        <end position="123"/>
    </location>
</feature>